<sequence length="969" mass="107595">MTESPTAGPGGVPRADDADSDVPRYRYTAELAARLERTWQENWARLGTFNVPNPVGSLAPPDGAAVPDDKLFVQDMFPYPSGEGLHVGHPLGYIATDVYARYFRMVGRNVLHALGFDAFGLPAEQYAVQTGTHPRTRTEANVVNFRRQLGRLGFGHDSRRSFSTTDVDFYRWTQWIFLQIYNAWFDTTANKARPISELVAEFESGARCLDGGRDWAKLTAGERADVIDEYRLVYRADSLVNWCPGLGTVLANEEVTADGRSDRGNFPVFRKRLRQWMMRITAYADRLLDDLDVLDWPEQVKTMQRNWIGRSTGAVALFSARAASDDGFEVDIEVFTTRPDTLFGATYLVLAPEHDLVDELVAASWPAGVNPLWTYGGGTPGEAIAAYRRAIAAKSDLERQESREKTGVFLGSYAINPANGEPVPIFIADYVLAGYGTGAIMAVPGHDQRDWDFARAFGLPIVEVIAGGNISESAYTGDGILVNSDYLNGMSVPAAKRAIVDRLESAGRGRARIEFKLRDWLFARQRYWGEPFPIVYDSDGRPHALDEAALPVELPDVPDYSPVLFDPDDADSEPSPPLAKATEWVHVDLDLGDGLKPYSRDTNVMPQWAGSSWYELRYTDPHNSERFCAKENEAYWMGPRPAEHGPDDPGGVDLYVGGAEHAVLHLLYSRFWHKVLYDLGHVSSREPYRRLVNQGYIQAYAYTDARGSYVPAEQVIERGDRFVYPGPDGEVEVFQEFGKIGKSLKNSVSPDEICDAYGADTLRVYEMSMGPLEASRPWATKDVVGAYRFLQRVWRLVVDEHTGETRVADGVELDIDTLRALHRTIVGVSEDFAALRNNTATAKLIEYTNHLTKKHRDAVPRAAVEPLVQMLAPLAPHIAEELWLRLGNTTSLAHGPFPKADAAYLVDETVEYPVQVNGKVRGRVVVAADTDEETLKAAVLTDEKVQAFLAGATPRKVIVVAGRLVNLVI</sequence>
<protein>
    <recommendedName>
        <fullName evidence="1">Leucine--tRNA ligase</fullName>
        <ecNumber evidence="1">6.1.1.4</ecNumber>
    </recommendedName>
    <alternativeName>
        <fullName evidence="1">Leucyl-tRNA synthetase</fullName>
        <shortName evidence="1">LeuRS</shortName>
    </alternativeName>
</protein>
<accession>A5TYB2</accession>
<feature type="chain" id="PRO_1000009375" description="Leucine--tRNA ligase">
    <location>
        <begin position="1"/>
        <end position="969"/>
    </location>
</feature>
<feature type="short sequence motif" description="'HIGH' region">
    <location>
        <begin position="78"/>
        <end position="89"/>
    </location>
</feature>
<feature type="short sequence motif" description="'KMSKS' region">
    <location>
        <begin position="739"/>
        <end position="743"/>
    </location>
</feature>
<feature type="binding site" evidence="1">
    <location>
        <position position="742"/>
    </location>
    <ligand>
        <name>ATP</name>
        <dbReference type="ChEBI" id="CHEBI:30616"/>
    </ligand>
</feature>
<organism>
    <name type="scientific">Mycobacterium tuberculosis (strain ATCC 25177 / H37Ra)</name>
    <dbReference type="NCBI Taxonomy" id="419947"/>
    <lineage>
        <taxon>Bacteria</taxon>
        <taxon>Bacillati</taxon>
        <taxon>Actinomycetota</taxon>
        <taxon>Actinomycetes</taxon>
        <taxon>Mycobacteriales</taxon>
        <taxon>Mycobacteriaceae</taxon>
        <taxon>Mycobacterium</taxon>
        <taxon>Mycobacterium tuberculosis complex</taxon>
    </lineage>
</organism>
<comment type="catalytic activity">
    <reaction evidence="1">
        <text>tRNA(Leu) + L-leucine + ATP = L-leucyl-tRNA(Leu) + AMP + diphosphate</text>
        <dbReference type="Rhea" id="RHEA:11688"/>
        <dbReference type="Rhea" id="RHEA-COMP:9613"/>
        <dbReference type="Rhea" id="RHEA-COMP:9622"/>
        <dbReference type="ChEBI" id="CHEBI:30616"/>
        <dbReference type="ChEBI" id="CHEBI:33019"/>
        <dbReference type="ChEBI" id="CHEBI:57427"/>
        <dbReference type="ChEBI" id="CHEBI:78442"/>
        <dbReference type="ChEBI" id="CHEBI:78494"/>
        <dbReference type="ChEBI" id="CHEBI:456215"/>
        <dbReference type="EC" id="6.1.1.4"/>
    </reaction>
</comment>
<comment type="subcellular location">
    <subcellularLocation>
        <location evidence="1">Cytoplasm</location>
    </subcellularLocation>
</comment>
<comment type="similarity">
    <text evidence="1">Belongs to the class-I aminoacyl-tRNA synthetase family.</text>
</comment>
<gene>
    <name evidence="1" type="primary">leuS</name>
    <name type="ordered locus">MRA_0044</name>
</gene>
<reference key="1">
    <citation type="journal article" date="2008" name="PLoS ONE">
        <title>Genetic basis of virulence attenuation revealed by comparative genomic analysis of Mycobacterium tuberculosis strain H37Ra versus H37Rv.</title>
        <authorList>
            <person name="Zheng H."/>
            <person name="Lu L."/>
            <person name="Wang B."/>
            <person name="Pu S."/>
            <person name="Zhang X."/>
            <person name="Zhu G."/>
            <person name="Shi W."/>
            <person name="Zhang L."/>
            <person name="Wang H."/>
            <person name="Wang S."/>
            <person name="Zhao G."/>
            <person name="Zhang Y."/>
        </authorList>
    </citation>
    <scope>NUCLEOTIDE SEQUENCE [LARGE SCALE GENOMIC DNA]</scope>
    <source>
        <strain>ATCC 25177 / H37Ra</strain>
    </source>
</reference>
<keyword id="KW-0030">Aminoacyl-tRNA synthetase</keyword>
<keyword id="KW-0067">ATP-binding</keyword>
<keyword id="KW-0963">Cytoplasm</keyword>
<keyword id="KW-0436">Ligase</keyword>
<keyword id="KW-0547">Nucleotide-binding</keyword>
<keyword id="KW-0648">Protein biosynthesis</keyword>
<keyword id="KW-1185">Reference proteome</keyword>
<dbReference type="EC" id="6.1.1.4" evidence="1"/>
<dbReference type="EMBL" id="CP000611">
    <property type="protein sequence ID" value="ABQ71762.1"/>
    <property type="molecule type" value="Genomic_DNA"/>
</dbReference>
<dbReference type="RefSeq" id="WP_003900794.1">
    <property type="nucleotide sequence ID" value="NZ_CP016972.1"/>
</dbReference>
<dbReference type="SMR" id="A5TYB2"/>
<dbReference type="GeneID" id="45424000"/>
<dbReference type="KEGG" id="mra:MRA_0044"/>
<dbReference type="eggNOG" id="COG0495">
    <property type="taxonomic scope" value="Bacteria"/>
</dbReference>
<dbReference type="HOGENOM" id="CLU_004427_0_0_11"/>
<dbReference type="Proteomes" id="UP000001988">
    <property type="component" value="Chromosome"/>
</dbReference>
<dbReference type="GO" id="GO:0005829">
    <property type="term" value="C:cytosol"/>
    <property type="evidence" value="ECO:0007669"/>
    <property type="project" value="TreeGrafter"/>
</dbReference>
<dbReference type="GO" id="GO:0002161">
    <property type="term" value="F:aminoacyl-tRNA deacylase activity"/>
    <property type="evidence" value="ECO:0007669"/>
    <property type="project" value="InterPro"/>
</dbReference>
<dbReference type="GO" id="GO:0005524">
    <property type="term" value="F:ATP binding"/>
    <property type="evidence" value="ECO:0007669"/>
    <property type="project" value="UniProtKB-UniRule"/>
</dbReference>
<dbReference type="GO" id="GO:0004823">
    <property type="term" value="F:leucine-tRNA ligase activity"/>
    <property type="evidence" value="ECO:0007669"/>
    <property type="project" value="UniProtKB-UniRule"/>
</dbReference>
<dbReference type="GO" id="GO:0006429">
    <property type="term" value="P:leucyl-tRNA aminoacylation"/>
    <property type="evidence" value="ECO:0007669"/>
    <property type="project" value="UniProtKB-UniRule"/>
</dbReference>
<dbReference type="CDD" id="cd07958">
    <property type="entry name" value="Anticodon_Ia_Leu_BEm"/>
    <property type="match status" value="1"/>
</dbReference>
<dbReference type="FunFam" id="3.40.50.620:FF:000060">
    <property type="entry name" value="Leucine--tRNA ligase"/>
    <property type="match status" value="1"/>
</dbReference>
<dbReference type="FunFam" id="3.40.50.620:FF:000087">
    <property type="entry name" value="Leucine--tRNA ligase"/>
    <property type="match status" value="1"/>
</dbReference>
<dbReference type="FunFam" id="3.40.50.620:FF:000239">
    <property type="entry name" value="Leucine--tRNA ligase"/>
    <property type="match status" value="1"/>
</dbReference>
<dbReference type="FunFam" id="3.90.740.10:FF:000017">
    <property type="entry name" value="Leucine--tRNA ligase"/>
    <property type="match status" value="1"/>
</dbReference>
<dbReference type="FunFam" id="1.10.730.10:FF:000011">
    <property type="entry name" value="Leucine--tRNA ligase chloroplastic/mitochondrial"/>
    <property type="match status" value="1"/>
</dbReference>
<dbReference type="Gene3D" id="3.40.50.620">
    <property type="entry name" value="HUPs"/>
    <property type="match status" value="3"/>
</dbReference>
<dbReference type="Gene3D" id="1.10.730.10">
    <property type="entry name" value="Isoleucyl-tRNA Synthetase, Domain 1"/>
    <property type="match status" value="1"/>
</dbReference>
<dbReference type="Gene3D" id="3.90.740.10">
    <property type="entry name" value="Valyl/Leucyl/Isoleucyl-tRNA synthetase, editing domain"/>
    <property type="match status" value="1"/>
</dbReference>
<dbReference type="HAMAP" id="MF_00049_B">
    <property type="entry name" value="Leu_tRNA_synth_B"/>
    <property type="match status" value="1"/>
</dbReference>
<dbReference type="InterPro" id="IPR001412">
    <property type="entry name" value="aa-tRNA-synth_I_CS"/>
</dbReference>
<dbReference type="InterPro" id="IPR002302">
    <property type="entry name" value="Leu-tRNA-ligase"/>
</dbReference>
<dbReference type="InterPro" id="IPR025709">
    <property type="entry name" value="Leu_tRNA-synth_edit"/>
</dbReference>
<dbReference type="InterPro" id="IPR013155">
    <property type="entry name" value="M/V/L/I-tRNA-synth_anticd-bd"/>
</dbReference>
<dbReference type="InterPro" id="IPR015413">
    <property type="entry name" value="Methionyl/Leucyl_tRNA_Synth"/>
</dbReference>
<dbReference type="InterPro" id="IPR014729">
    <property type="entry name" value="Rossmann-like_a/b/a_fold"/>
</dbReference>
<dbReference type="InterPro" id="IPR009080">
    <property type="entry name" value="tRNAsynth_Ia_anticodon-bd"/>
</dbReference>
<dbReference type="InterPro" id="IPR009008">
    <property type="entry name" value="Val/Leu/Ile-tRNA-synth_edit"/>
</dbReference>
<dbReference type="NCBIfam" id="TIGR00396">
    <property type="entry name" value="leuS_bact"/>
    <property type="match status" value="1"/>
</dbReference>
<dbReference type="PANTHER" id="PTHR43740:SF2">
    <property type="entry name" value="LEUCINE--TRNA LIGASE, MITOCHONDRIAL"/>
    <property type="match status" value="1"/>
</dbReference>
<dbReference type="PANTHER" id="PTHR43740">
    <property type="entry name" value="LEUCYL-TRNA SYNTHETASE"/>
    <property type="match status" value="1"/>
</dbReference>
<dbReference type="Pfam" id="PF08264">
    <property type="entry name" value="Anticodon_1"/>
    <property type="match status" value="1"/>
</dbReference>
<dbReference type="Pfam" id="PF13603">
    <property type="entry name" value="tRNA-synt_1_2"/>
    <property type="match status" value="1"/>
</dbReference>
<dbReference type="Pfam" id="PF09334">
    <property type="entry name" value="tRNA-synt_1g"/>
    <property type="match status" value="1"/>
</dbReference>
<dbReference type="PRINTS" id="PR00985">
    <property type="entry name" value="TRNASYNTHLEU"/>
</dbReference>
<dbReference type="SUPFAM" id="SSF47323">
    <property type="entry name" value="Anticodon-binding domain of a subclass of class I aminoacyl-tRNA synthetases"/>
    <property type="match status" value="1"/>
</dbReference>
<dbReference type="SUPFAM" id="SSF52374">
    <property type="entry name" value="Nucleotidylyl transferase"/>
    <property type="match status" value="1"/>
</dbReference>
<dbReference type="SUPFAM" id="SSF50677">
    <property type="entry name" value="ValRS/IleRS/LeuRS editing domain"/>
    <property type="match status" value="1"/>
</dbReference>
<dbReference type="PROSITE" id="PS00178">
    <property type="entry name" value="AA_TRNA_LIGASE_I"/>
    <property type="match status" value="1"/>
</dbReference>
<evidence type="ECO:0000255" key="1">
    <source>
        <dbReference type="HAMAP-Rule" id="MF_00049"/>
    </source>
</evidence>
<proteinExistence type="inferred from homology"/>
<name>SYL_MYCTA</name>